<evidence type="ECO:0000255" key="1">
    <source>
        <dbReference type="HAMAP-Rule" id="MF_00109"/>
    </source>
</evidence>
<name>AROK_HELHP</name>
<proteinExistence type="inferred from homology"/>
<gene>
    <name evidence="1" type="primary">aroK</name>
    <name type="ordered locus">HH_0628</name>
</gene>
<accession>Q7VIH7</accession>
<sequence length="167" mass="18925">MENIVLIGFMGSGKTTIGREIALLGGRFLLDTDQIIEQNMGKSINEIFESVGESGFRRIESQLILWLSANVKNAVIATGGGMPIYNDVAYLGYVFWLDMSFESILKRLTITEQEKRPLFSDISKARQLYNERKSIYKKQSKYIINGDASALEIARKIIECMDKEVQE</sequence>
<feature type="chain" id="PRO_0000192386" description="Shikimate kinase">
    <location>
        <begin position="1"/>
        <end position="167"/>
    </location>
</feature>
<feature type="binding site" evidence="1">
    <location>
        <begin position="8"/>
        <end position="15"/>
    </location>
    <ligand>
        <name>ATP</name>
        <dbReference type="ChEBI" id="CHEBI:30616"/>
    </ligand>
</feature>
<comment type="catalytic activity">
    <reaction evidence="1">
        <text>shikimate + ATP = 3-phosphoshikimate + ADP + H(+)</text>
        <dbReference type="Rhea" id="RHEA:13121"/>
        <dbReference type="ChEBI" id="CHEBI:15378"/>
        <dbReference type="ChEBI" id="CHEBI:30616"/>
        <dbReference type="ChEBI" id="CHEBI:36208"/>
        <dbReference type="ChEBI" id="CHEBI:145989"/>
        <dbReference type="ChEBI" id="CHEBI:456216"/>
        <dbReference type="EC" id="2.7.1.71"/>
    </reaction>
</comment>
<comment type="pathway">
    <text evidence="1">Metabolic intermediate biosynthesis; chorismate biosynthesis; chorismate from D-erythrose 4-phosphate and phosphoenolpyruvate: step 5/7.</text>
</comment>
<comment type="subcellular location">
    <subcellularLocation>
        <location evidence="1">Cytoplasm</location>
    </subcellularLocation>
</comment>
<comment type="similarity">
    <text evidence="1">Belongs to the shikimate kinase family.</text>
</comment>
<keyword id="KW-0028">Amino-acid biosynthesis</keyword>
<keyword id="KW-0057">Aromatic amino acid biosynthesis</keyword>
<keyword id="KW-0067">ATP-binding</keyword>
<keyword id="KW-0963">Cytoplasm</keyword>
<keyword id="KW-0418">Kinase</keyword>
<keyword id="KW-0547">Nucleotide-binding</keyword>
<keyword id="KW-1185">Reference proteome</keyword>
<keyword id="KW-0808">Transferase</keyword>
<organism>
    <name type="scientific">Helicobacter hepaticus (strain ATCC 51449 / 3B1)</name>
    <dbReference type="NCBI Taxonomy" id="235279"/>
    <lineage>
        <taxon>Bacteria</taxon>
        <taxon>Pseudomonadati</taxon>
        <taxon>Campylobacterota</taxon>
        <taxon>Epsilonproteobacteria</taxon>
        <taxon>Campylobacterales</taxon>
        <taxon>Helicobacteraceae</taxon>
        <taxon>Helicobacter</taxon>
    </lineage>
</organism>
<reference key="1">
    <citation type="journal article" date="2003" name="Proc. Natl. Acad. Sci. U.S.A.">
        <title>The complete genome sequence of the carcinogenic bacterium Helicobacter hepaticus.</title>
        <authorList>
            <person name="Suerbaum S."/>
            <person name="Josenhans C."/>
            <person name="Sterzenbach T."/>
            <person name="Drescher B."/>
            <person name="Brandt P."/>
            <person name="Bell M."/>
            <person name="Droege M."/>
            <person name="Fartmann B."/>
            <person name="Fischer H.-P."/>
            <person name="Ge Z."/>
            <person name="Hoerster A."/>
            <person name="Holland R."/>
            <person name="Klein K."/>
            <person name="Koenig J."/>
            <person name="Macko L."/>
            <person name="Mendz G.L."/>
            <person name="Nyakatura G."/>
            <person name="Schauer D.B."/>
            <person name="Shen Z."/>
            <person name="Weber J."/>
            <person name="Frosch M."/>
            <person name="Fox J.G."/>
        </authorList>
    </citation>
    <scope>NUCLEOTIDE SEQUENCE [LARGE SCALE GENOMIC DNA]</scope>
    <source>
        <strain>ATCC 51449 / 3B1</strain>
    </source>
</reference>
<dbReference type="EC" id="2.7.1.71" evidence="1"/>
<dbReference type="EMBL" id="AE017125">
    <property type="protein sequence ID" value="AAP77225.1"/>
    <property type="molecule type" value="Genomic_DNA"/>
</dbReference>
<dbReference type="RefSeq" id="WP_011115470.1">
    <property type="nucleotide sequence ID" value="NC_004917.1"/>
</dbReference>
<dbReference type="SMR" id="Q7VIH7"/>
<dbReference type="STRING" id="235279.HH_0628"/>
<dbReference type="KEGG" id="hhe:HH_0628"/>
<dbReference type="eggNOG" id="COG0703">
    <property type="taxonomic scope" value="Bacteria"/>
</dbReference>
<dbReference type="HOGENOM" id="CLU_057607_4_0_7"/>
<dbReference type="OrthoDB" id="9800332at2"/>
<dbReference type="UniPathway" id="UPA00053">
    <property type="reaction ID" value="UER00088"/>
</dbReference>
<dbReference type="Proteomes" id="UP000002495">
    <property type="component" value="Chromosome"/>
</dbReference>
<dbReference type="GO" id="GO:0005829">
    <property type="term" value="C:cytosol"/>
    <property type="evidence" value="ECO:0007669"/>
    <property type="project" value="TreeGrafter"/>
</dbReference>
<dbReference type="GO" id="GO:0005524">
    <property type="term" value="F:ATP binding"/>
    <property type="evidence" value="ECO:0007669"/>
    <property type="project" value="UniProtKB-UniRule"/>
</dbReference>
<dbReference type="GO" id="GO:0000287">
    <property type="term" value="F:magnesium ion binding"/>
    <property type="evidence" value="ECO:0007669"/>
    <property type="project" value="UniProtKB-UniRule"/>
</dbReference>
<dbReference type="GO" id="GO:0004765">
    <property type="term" value="F:shikimate kinase activity"/>
    <property type="evidence" value="ECO:0007669"/>
    <property type="project" value="UniProtKB-UniRule"/>
</dbReference>
<dbReference type="GO" id="GO:0008652">
    <property type="term" value="P:amino acid biosynthetic process"/>
    <property type="evidence" value="ECO:0007669"/>
    <property type="project" value="UniProtKB-KW"/>
</dbReference>
<dbReference type="GO" id="GO:0009073">
    <property type="term" value="P:aromatic amino acid family biosynthetic process"/>
    <property type="evidence" value="ECO:0007669"/>
    <property type="project" value="UniProtKB-KW"/>
</dbReference>
<dbReference type="GO" id="GO:0009423">
    <property type="term" value="P:chorismate biosynthetic process"/>
    <property type="evidence" value="ECO:0007669"/>
    <property type="project" value="UniProtKB-UniRule"/>
</dbReference>
<dbReference type="CDD" id="cd00464">
    <property type="entry name" value="SK"/>
    <property type="match status" value="1"/>
</dbReference>
<dbReference type="Gene3D" id="3.40.50.300">
    <property type="entry name" value="P-loop containing nucleotide triphosphate hydrolases"/>
    <property type="match status" value="1"/>
</dbReference>
<dbReference type="HAMAP" id="MF_00109">
    <property type="entry name" value="Shikimate_kinase"/>
    <property type="match status" value="1"/>
</dbReference>
<dbReference type="InterPro" id="IPR027417">
    <property type="entry name" value="P-loop_NTPase"/>
</dbReference>
<dbReference type="InterPro" id="IPR031322">
    <property type="entry name" value="Shikimate/glucono_kinase"/>
</dbReference>
<dbReference type="InterPro" id="IPR000623">
    <property type="entry name" value="Shikimate_kinase/TSH1"/>
</dbReference>
<dbReference type="PANTHER" id="PTHR21087">
    <property type="entry name" value="SHIKIMATE KINASE"/>
    <property type="match status" value="1"/>
</dbReference>
<dbReference type="PANTHER" id="PTHR21087:SF16">
    <property type="entry name" value="SHIKIMATE KINASE 1, CHLOROPLASTIC"/>
    <property type="match status" value="1"/>
</dbReference>
<dbReference type="Pfam" id="PF01202">
    <property type="entry name" value="SKI"/>
    <property type="match status" value="1"/>
</dbReference>
<dbReference type="PRINTS" id="PR01100">
    <property type="entry name" value="SHIKIMTKNASE"/>
</dbReference>
<dbReference type="SUPFAM" id="SSF52540">
    <property type="entry name" value="P-loop containing nucleoside triphosphate hydrolases"/>
    <property type="match status" value="1"/>
</dbReference>
<protein>
    <recommendedName>
        <fullName evidence="1">Shikimate kinase</fullName>
        <shortName evidence="1">SK</shortName>
        <ecNumber evidence="1">2.7.1.71</ecNumber>
    </recommendedName>
</protein>